<sequence>MEFRKPFKSHSSYKQIISTGDQNEKTKKKKKLANLDDGDIAKTQSSGSSFDGNSYKFWQDIATDDYTKSGSFDFPQYREEITLDVNEETEETEDVSNNNNLSGSKETRVFFKINSSGTNNMSGSVRSCTSSTSFSSATMRLNLEQQLEDEGEVVVRCSSVRKTELVSRAKARSRLIDPPQEEEQQYSSWIGTSDQLRSGLLGRHSDDIEEEDDSSAEEDVPVEYRKLKMDAITLLQWMSLIALVVALVLSLGLHTWRNATLWSLHLWKWEVVLLVLICGRLVSGCGIRIIVFFIERNFLLRKRVLYFVYGVKTAVQNCLWLGLVLLAWHFLFDKKVEKETQSDVLLLMSKILVCFLLSTVLWLIKTLVVKVLASSFHVSTYFDRIQEALFHHYLIETLSGPPMLELSRIEEEEDRTQDEIYKMQKGGADLSPELCSAAFPQEKSGSTMNMKFSPIIPKTGSDNGITMDDLHKMNQKNVSAWNMKRLMKIVRNVSLSTLDEQALQNTCEDESTRQIRSEKEAKAAARKIFKNVAQPGTKHIYLEDLMRFLRVDEAMKTMCLFEGALVTKKITKSALKNWLVNAFRERRALALTLNDTKTAVNKLHHMISFLTAIVIIVIWLILLEIATSKYLLFLTSQVVLLAFMFGNSLKTVFESIIFLFIIHPYDVGDRLLIDTVEMVVEEMNILTTVFLRADNLKIVYPNILLWQKAIHNYNRSPDMGDEVTCCVHITTPPEKIAAIKQRISSYIDSKPEYWYPKADVIVKDVEDLNIVRIAIWLCHKINHQNMGERFTRRALLIEEVIKILLELDIQYRFHPLDINVKTMPTVVSSRVPPAWSQNPDLRRIILLEC</sequence>
<protein>
    <recommendedName>
        <fullName>Mechanosensitive ion channel protein 7</fullName>
    </recommendedName>
    <alternativeName>
        <fullName>Mechanosensitive channel of small conductance-like 7</fullName>
    </alternativeName>
    <alternativeName>
        <fullName>MscS-Like protein 7</fullName>
    </alternativeName>
</protein>
<dbReference type="EMBL" id="CP002685">
    <property type="protein sequence ID" value="AEC06571.1"/>
    <property type="molecule type" value="Genomic_DNA"/>
</dbReference>
<dbReference type="RefSeq" id="NP_179292.1">
    <property type="nucleotide sequence ID" value="NM_127253.1"/>
</dbReference>
<dbReference type="SMR" id="F4IME1"/>
<dbReference type="FunCoup" id="F4IME1">
    <property type="interactions" value="14"/>
</dbReference>
<dbReference type="STRING" id="3702.F4IME1"/>
<dbReference type="PaxDb" id="3702-AT2G17000.1"/>
<dbReference type="EnsemblPlants" id="AT2G17000.1">
    <property type="protein sequence ID" value="AT2G17000.1"/>
    <property type="gene ID" value="AT2G17000"/>
</dbReference>
<dbReference type="GeneID" id="816203"/>
<dbReference type="Gramene" id="AT2G17000.1">
    <property type="protein sequence ID" value="AT2G17000.1"/>
    <property type="gene ID" value="AT2G17000"/>
</dbReference>
<dbReference type="KEGG" id="ath:AT2G17000"/>
<dbReference type="Araport" id="AT2G17000"/>
<dbReference type="TAIR" id="AT2G17000"/>
<dbReference type="eggNOG" id="KOG4629">
    <property type="taxonomic scope" value="Eukaryota"/>
</dbReference>
<dbReference type="HOGENOM" id="CLU_013552_0_0_1"/>
<dbReference type="InParanoid" id="F4IME1"/>
<dbReference type="PRO" id="PR:F4IME1"/>
<dbReference type="Proteomes" id="UP000006548">
    <property type="component" value="Chromosome 2"/>
</dbReference>
<dbReference type="ExpressionAtlas" id="F4IME1">
    <property type="expression patterns" value="baseline and differential"/>
</dbReference>
<dbReference type="GO" id="GO:0016020">
    <property type="term" value="C:membrane"/>
    <property type="evidence" value="ECO:0007669"/>
    <property type="project" value="UniProtKB-SubCell"/>
</dbReference>
<dbReference type="GO" id="GO:0034220">
    <property type="term" value="P:monoatomic ion transmembrane transport"/>
    <property type="evidence" value="ECO:0007669"/>
    <property type="project" value="UniProtKB-KW"/>
</dbReference>
<dbReference type="FunFam" id="2.30.30.60:FF:000003">
    <property type="entry name" value="Predicted mechanosensitive ion channel"/>
    <property type="match status" value="1"/>
</dbReference>
<dbReference type="Gene3D" id="2.30.30.60">
    <property type="match status" value="1"/>
</dbReference>
<dbReference type="InterPro" id="IPR010920">
    <property type="entry name" value="LSM_dom_sf"/>
</dbReference>
<dbReference type="InterPro" id="IPR016688">
    <property type="entry name" value="MscS-like_plants/fungi"/>
</dbReference>
<dbReference type="InterPro" id="IPR023408">
    <property type="entry name" value="MscS_beta-dom_sf"/>
</dbReference>
<dbReference type="InterPro" id="IPR006685">
    <property type="entry name" value="MscS_channel_2nd"/>
</dbReference>
<dbReference type="PANTHER" id="PTHR31618">
    <property type="entry name" value="MECHANOSENSITIVE ION CHANNEL PROTEIN 5"/>
    <property type="match status" value="1"/>
</dbReference>
<dbReference type="PANTHER" id="PTHR31618:SF18">
    <property type="entry name" value="MECHANOSENSITIVE ION CHANNEL PROTEIN 7"/>
    <property type="match status" value="1"/>
</dbReference>
<dbReference type="Pfam" id="PF00924">
    <property type="entry name" value="MS_channel_2nd"/>
    <property type="match status" value="1"/>
</dbReference>
<dbReference type="PIRSF" id="PIRSF017209">
    <property type="entry name" value="Memb_At2g17000_prd"/>
    <property type="match status" value="1"/>
</dbReference>
<dbReference type="SUPFAM" id="SSF50182">
    <property type="entry name" value="Sm-like ribonucleoproteins"/>
    <property type="match status" value="1"/>
</dbReference>
<keyword id="KW-0407">Ion channel</keyword>
<keyword id="KW-0406">Ion transport</keyword>
<keyword id="KW-0472">Membrane</keyword>
<keyword id="KW-1185">Reference proteome</keyword>
<keyword id="KW-0812">Transmembrane</keyword>
<keyword id="KW-1133">Transmembrane helix</keyword>
<keyword id="KW-0813">Transport</keyword>
<feature type="chain" id="PRO_0000415329" description="Mechanosensitive ion channel protein 7">
    <location>
        <begin position="1"/>
        <end position="849"/>
    </location>
</feature>
<feature type="transmembrane region" description="Helical" evidence="2">
    <location>
        <begin position="231"/>
        <end position="251"/>
    </location>
</feature>
<feature type="transmembrane region" description="Helical" evidence="2">
    <location>
        <begin position="274"/>
        <end position="294"/>
    </location>
</feature>
<feature type="transmembrane region" description="Helical" evidence="2">
    <location>
        <begin position="313"/>
        <end position="333"/>
    </location>
</feature>
<feature type="transmembrane region" description="Helical" evidence="2">
    <location>
        <begin position="344"/>
        <end position="364"/>
    </location>
</feature>
<feature type="transmembrane region" description="Helical" evidence="2">
    <location>
        <begin position="606"/>
        <end position="626"/>
    </location>
</feature>
<feature type="transmembrane region" description="Helical" evidence="2">
    <location>
        <begin position="642"/>
        <end position="662"/>
    </location>
</feature>
<feature type="region of interest" description="Disordered" evidence="3">
    <location>
        <begin position="1"/>
        <end position="49"/>
    </location>
</feature>
<feature type="compositionally biased region" description="Polar residues" evidence="3">
    <location>
        <begin position="9"/>
        <end position="21"/>
    </location>
</feature>
<evidence type="ECO:0000250" key="1"/>
<evidence type="ECO:0000255" key="2"/>
<evidence type="ECO:0000256" key="3">
    <source>
        <dbReference type="SAM" id="MobiDB-lite"/>
    </source>
</evidence>
<evidence type="ECO:0000269" key="4">
    <source>
    </source>
</evidence>
<evidence type="ECO:0000305" key="5"/>
<organism>
    <name type="scientific">Arabidopsis thaliana</name>
    <name type="common">Mouse-ear cress</name>
    <dbReference type="NCBI Taxonomy" id="3702"/>
    <lineage>
        <taxon>Eukaryota</taxon>
        <taxon>Viridiplantae</taxon>
        <taxon>Streptophyta</taxon>
        <taxon>Embryophyta</taxon>
        <taxon>Tracheophyta</taxon>
        <taxon>Spermatophyta</taxon>
        <taxon>Magnoliopsida</taxon>
        <taxon>eudicotyledons</taxon>
        <taxon>Gunneridae</taxon>
        <taxon>Pentapetalae</taxon>
        <taxon>rosids</taxon>
        <taxon>malvids</taxon>
        <taxon>Brassicales</taxon>
        <taxon>Brassicaceae</taxon>
        <taxon>Camelineae</taxon>
        <taxon>Arabidopsis</taxon>
    </lineage>
</organism>
<comment type="function">
    <text evidence="1">Mechanosensitive channel that opens in response to stretch forces in the membrane lipid bilayer.</text>
</comment>
<comment type="subcellular location">
    <subcellularLocation>
        <location evidence="5">Membrane</location>
        <topology evidence="5">Multi-pass membrane protein</topology>
    </subcellularLocation>
</comment>
<comment type="developmental stage">
    <text evidence="4">Expressed during somatic embryogenesis.</text>
</comment>
<comment type="similarity">
    <text evidence="5">Belongs to the MscS (TC 1.A.23) family.</text>
</comment>
<accession>F4IME1</accession>
<gene>
    <name type="primary">MSL7</name>
    <name type="ordered locus">At2g17000</name>
    <name type="ORF">F6P23.16</name>
</gene>
<proteinExistence type="evidence at transcript level"/>
<reference key="1">
    <citation type="journal article" date="1999" name="Nature">
        <title>Sequence and analysis of chromosome 2 of the plant Arabidopsis thaliana.</title>
        <authorList>
            <person name="Lin X."/>
            <person name="Kaul S."/>
            <person name="Rounsley S.D."/>
            <person name="Shea T.P."/>
            <person name="Benito M.-I."/>
            <person name="Town C.D."/>
            <person name="Fujii C.Y."/>
            <person name="Mason T.M."/>
            <person name="Bowman C.L."/>
            <person name="Barnstead M.E."/>
            <person name="Feldblyum T.V."/>
            <person name="Buell C.R."/>
            <person name="Ketchum K.A."/>
            <person name="Lee J.J."/>
            <person name="Ronning C.M."/>
            <person name="Koo H.L."/>
            <person name="Moffat K.S."/>
            <person name="Cronin L.A."/>
            <person name="Shen M."/>
            <person name="Pai G."/>
            <person name="Van Aken S."/>
            <person name="Umayam L."/>
            <person name="Tallon L.J."/>
            <person name="Gill J.E."/>
            <person name="Adams M.D."/>
            <person name="Carrera A.J."/>
            <person name="Creasy T.H."/>
            <person name="Goodman H.M."/>
            <person name="Somerville C.R."/>
            <person name="Copenhaver G.P."/>
            <person name="Preuss D."/>
            <person name="Nierman W.C."/>
            <person name="White O."/>
            <person name="Eisen J.A."/>
            <person name="Salzberg S.L."/>
            <person name="Fraser C.M."/>
            <person name="Venter J.C."/>
        </authorList>
    </citation>
    <scope>NUCLEOTIDE SEQUENCE [LARGE SCALE GENOMIC DNA]</scope>
    <source>
        <strain>cv. Columbia</strain>
    </source>
</reference>
<reference key="2">
    <citation type="journal article" date="2017" name="Plant J.">
        <title>Araport11: a complete reannotation of the Arabidopsis thaliana reference genome.</title>
        <authorList>
            <person name="Cheng C.Y."/>
            <person name="Krishnakumar V."/>
            <person name="Chan A.P."/>
            <person name="Thibaud-Nissen F."/>
            <person name="Schobel S."/>
            <person name="Town C.D."/>
        </authorList>
    </citation>
    <scope>GENOME REANNOTATION</scope>
    <source>
        <strain>cv. Columbia</strain>
    </source>
</reference>
<reference key="3">
    <citation type="journal article" date="2003" name="Microbiol. Mol. Biol. Rev.">
        <title>Two families of mechanosensitive channel proteins.</title>
        <authorList>
            <person name="Pivetti C.D."/>
            <person name="Yen M.R."/>
            <person name="Miller S."/>
            <person name="Busch W."/>
            <person name="Tseng Y.H."/>
            <person name="Booth I.R."/>
            <person name="Saier M.H. Jr."/>
        </authorList>
    </citation>
    <scope>GENE FAMILY</scope>
</reference>
<reference key="4">
    <citation type="book" date="2007" name="Mechanosensitive Ion Channels, Part A">
        <title>MscS-like proteins in plants.</title>
        <editorList>
            <person name="Hamill O.P."/>
        </editorList>
        <authorList>
            <person name="Haswell E.S."/>
        </authorList>
    </citation>
    <scope>REVIEW</scope>
    <scope>GENE FAMILY</scope>
    <scope>NOMENCLATURE</scope>
</reference>
<reference key="5">
    <citation type="journal article" date="2016" name="J. Plant Physiol.">
        <title>Stress-related function of bHLH109 in somatic embryo induction in Arabidopsis.</title>
        <authorList>
            <person name="Nowak K."/>
            <person name="Gaj M.D."/>
        </authorList>
    </citation>
    <scope>DEVELOPMENTAL STAGE</scope>
</reference>
<name>MSL7_ARATH</name>